<gene>
    <name type="primary">EFG1</name>
    <name type="ORF">CC1G_04573</name>
</gene>
<organism>
    <name type="scientific">Coprinopsis cinerea (strain Okayama-7 / 130 / ATCC MYA-4618 / FGSC 9003)</name>
    <name type="common">Inky cap fungus</name>
    <name type="synonym">Hormographiella aspergillata</name>
    <dbReference type="NCBI Taxonomy" id="240176"/>
    <lineage>
        <taxon>Eukaryota</taxon>
        <taxon>Fungi</taxon>
        <taxon>Dikarya</taxon>
        <taxon>Basidiomycota</taxon>
        <taxon>Agaricomycotina</taxon>
        <taxon>Agaricomycetes</taxon>
        <taxon>Agaricomycetidae</taxon>
        <taxon>Agaricales</taxon>
        <taxon>Agaricineae</taxon>
        <taxon>Psathyrellaceae</taxon>
        <taxon>Coprinopsis</taxon>
    </lineage>
</organism>
<comment type="function">
    <text evidence="1">Involved in rRNA processing.</text>
</comment>
<comment type="subcellular location">
    <subcellularLocation>
        <location evidence="1">Nucleus</location>
        <location evidence="1">Nucleolus</location>
    </subcellularLocation>
</comment>
<comment type="similarity">
    <text evidence="4">Belongs to the EFG1 family.</text>
</comment>
<dbReference type="EMBL" id="AACS02000003">
    <property type="protein sequence ID" value="EAU91805.1"/>
    <property type="molecule type" value="Genomic_DNA"/>
</dbReference>
<dbReference type="RefSeq" id="XP_001830140.1">
    <property type="nucleotide sequence ID" value="XM_001830088.1"/>
</dbReference>
<dbReference type="SMR" id="A8N5J5"/>
<dbReference type="FunCoup" id="A8N5J5">
    <property type="interactions" value="35"/>
</dbReference>
<dbReference type="STRING" id="240176.A8N5J5"/>
<dbReference type="GeneID" id="6006578"/>
<dbReference type="KEGG" id="cci:CC1G_04573"/>
<dbReference type="VEuPathDB" id="FungiDB:CC1G_04573"/>
<dbReference type="eggNOG" id="KOG4484">
    <property type="taxonomic scope" value="Eukaryota"/>
</dbReference>
<dbReference type="HOGENOM" id="CLU_066912_2_1_1"/>
<dbReference type="InParanoid" id="A8N5J5"/>
<dbReference type="OMA" id="KPHRIQE"/>
<dbReference type="OrthoDB" id="47732at2759"/>
<dbReference type="Proteomes" id="UP000001861">
    <property type="component" value="Unassembled WGS sequence"/>
</dbReference>
<dbReference type="GO" id="GO:0005730">
    <property type="term" value="C:nucleolus"/>
    <property type="evidence" value="ECO:0007669"/>
    <property type="project" value="UniProtKB-SubCell"/>
</dbReference>
<dbReference type="GO" id="GO:0030688">
    <property type="term" value="C:preribosome, small subunit precursor"/>
    <property type="evidence" value="ECO:0007669"/>
    <property type="project" value="TreeGrafter"/>
</dbReference>
<dbReference type="GO" id="GO:0000462">
    <property type="term" value="P:maturation of SSU-rRNA from tricistronic rRNA transcript (SSU-rRNA, 5.8S rRNA, LSU-rRNA)"/>
    <property type="evidence" value="ECO:0007669"/>
    <property type="project" value="TreeGrafter"/>
</dbReference>
<dbReference type="InterPro" id="IPR019310">
    <property type="entry name" value="Efg1"/>
</dbReference>
<dbReference type="InterPro" id="IPR050786">
    <property type="entry name" value="EFG1_rRNA-proc"/>
</dbReference>
<dbReference type="PANTHER" id="PTHR33911">
    <property type="entry name" value="RRNA-PROCESSING PROTEIN EFG1"/>
    <property type="match status" value="1"/>
</dbReference>
<dbReference type="PANTHER" id="PTHR33911:SF1">
    <property type="entry name" value="RRNA-PROCESSING PROTEIN EFG1"/>
    <property type="match status" value="1"/>
</dbReference>
<dbReference type="Pfam" id="PF10153">
    <property type="entry name" value="Efg1"/>
    <property type="match status" value="1"/>
</dbReference>
<reference key="1">
    <citation type="journal article" date="2010" name="Proc. Natl. Acad. Sci. U.S.A.">
        <title>Insights into evolution of multicellular fungi from the assembled chromosomes of the mushroom Coprinopsis cinerea (Coprinus cinereus).</title>
        <authorList>
            <person name="Stajich J.E."/>
            <person name="Wilke S.K."/>
            <person name="Ahren D."/>
            <person name="Au C.H."/>
            <person name="Birren B.W."/>
            <person name="Borodovsky M."/>
            <person name="Burns C."/>
            <person name="Canbaeck B."/>
            <person name="Casselton L.A."/>
            <person name="Cheng C.K."/>
            <person name="Deng J."/>
            <person name="Dietrich F.S."/>
            <person name="Fargo D.C."/>
            <person name="Farman M.L."/>
            <person name="Gathman A.C."/>
            <person name="Goldberg J."/>
            <person name="Guigo R."/>
            <person name="Hoegger P.J."/>
            <person name="Hooker J.B."/>
            <person name="Huggins A."/>
            <person name="James T.Y."/>
            <person name="Kamada T."/>
            <person name="Kilaru S."/>
            <person name="Kodira C."/>
            <person name="Kuees U."/>
            <person name="Kupfer D."/>
            <person name="Kwan H.S."/>
            <person name="Lomsadze A."/>
            <person name="Li W."/>
            <person name="Lilly W.W."/>
            <person name="Ma L.-J."/>
            <person name="Mackey A.J."/>
            <person name="Manning G."/>
            <person name="Martin F."/>
            <person name="Muraguchi H."/>
            <person name="Natvig D.O."/>
            <person name="Palmerini H."/>
            <person name="Ramesh M.A."/>
            <person name="Rehmeyer C.J."/>
            <person name="Roe B.A."/>
            <person name="Shenoy N."/>
            <person name="Stanke M."/>
            <person name="Ter-Hovhannisyan V."/>
            <person name="Tunlid A."/>
            <person name="Velagapudi R."/>
            <person name="Vision T.J."/>
            <person name="Zeng Q."/>
            <person name="Zolan M.E."/>
            <person name="Pukkila P.J."/>
        </authorList>
    </citation>
    <scope>NUCLEOTIDE SEQUENCE [LARGE SCALE GENOMIC DNA]</scope>
    <source>
        <strain>Okayama-7 / 130 / ATCC MYA-4618 / FGSC 9003</strain>
    </source>
</reference>
<name>EFG1P_COPC7</name>
<sequence>MAPIRTKDKHKNAEASSSKSNKSHKKKPNHQPKASALPGKQKIKSSLRQVRRLLAKENLAADKRVEAERRLKALEAELQQVEQAHKERALAIRYHKVKFFERQKVTRKLNQVKRRLDSADGSEKEQLEAQLLEERVNLNYILHYPKTKKYISLFPPEVRKGEVTEASKTDAEKTNREREEIRQWIRDSMEKKELPSEPETQLGSGPGRPQASTQFPSKKSSNPVTKSGVQSSKPGDDIEDDEFFGNDSEDDGNEVEDEEDEDEED</sequence>
<keyword id="KW-0175">Coiled coil</keyword>
<keyword id="KW-0539">Nucleus</keyword>
<keyword id="KW-1185">Reference proteome</keyword>
<keyword id="KW-0698">rRNA processing</keyword>
<proteinExistence type="inferred from homology"/>
<protein>
    <recommendedName>
        <fullName>rRNA-processing protein EFG1</fullName>
    </recommendedName>
</protein>
<feature type="chain" id="PRO_0000330269" description="rRNA-processing protein EFG1">
    <location>
        <begin position="1"/>
        <end position="265"/>
    </location>
</feature>
<feature type="region of interest" description="Disordered" evidence="3">
    <location>
        <begin position="1"/>
        <end position="46"/>
    </location>
</feature>
<feature type="region of interest" description="Disordered" evidence="3">
    <location>
        <begin position="161"/>
        <end position="180"/>
    </location>
</feature>
<feature type="region of interest" description="Disordered" evidence="3">
    <location>
        <begin position="185"/>
        <end position="265"/>
    </location>
</feature>
<feature type="coiled-coil region" evidence="2">
    <location>
        <begin position="55"/>
        <end position="121"/>
    </location>
</feature>
<feature type="compositionally biased region" description="Basic residues" evidence="3">
    <location>
        <begin position="21"/>
        <end position="30"/>
    </location>
</feature>
<feature type="compositionally biased region" description="Basic and acidic residues" evidence="3">
    <location>
        <begin position="185"/>
        <end position="195"/>
    </location>
</feature>
<feature type="compositionally biased region" description="Polar residues" evidence="3">
    <location>
        <begin position="210"/>
        <end position="233"/>
    </location>
</feature>
<feature type="compositionally biased region" description="Acidic residues" evidence="3">
    <location>
        <begin position="237"/>
        <end position="265"/>
    </location>
</feature>
<accession>A8N5J5</accession>
<evidence type="ECO:0000250" key="1"/>
<evidence type="ECO:0000255" key="2"/>
<evidence type="ECO:0000256" key="3">
    <source>
        <dbReference type="SAM" id="MobiDB-lite"/>
    </source>
</evidence>
<evidence type="ECO:0000305" key="4"/>